<protein>
    <recommendedName>
        <fullName evidence="2">Large ribosomal subunit protein eL22</fullName>
    </recommendedName>
    <alternativeName>
        <fullName>60S ribosomal protein L22</fullName>
    </alternativeName>
</protein>
<evidence type="ECO:0000250" key="1">
    <source>
        <dbReference type="UniProtKB" id="P35268"/>
    </source>
</evidence>
<evidence type="ECO:0000305" key="2"/>
<name>RL22_CHICK</name>
<dbReference type="EMBL" id="AB046394">
    <property type="protein sequence ID" value="BAB21247.1"/>
    <property type="molecule type" value="mRNA"/>
</dbReference>
<dbReference type="RefSeq" id="NP_001382837.1">
    <property type="nucleotide sequence ID" value="NM_001395908.1"/>
</dbReference>
<dbReference type="RefSeq" id="NP_989472.1">
    <property type="nucleotide sequence ID" value="NM_204141.1"/>
</dbReference>
<dbReference type="PDB" id="8Q7Z">
    <property type="method" value="EM"/>
    <property type="resolution" value="2.50 A"/>
    <property type="chains" value="BU=1-128"/>
</dbReference>
<dbReference type="PDB" id="8Q87">
    <property type="method" value="EM"/>
    <property type="resolution" value="2.40 A"/>
    <property type="chains" value="BU=1-128"/>
</dbReference>
<dbReference type="PDBsum" id="8Q7Z"/>
<dbReference type="PDBsum" id="8Q87"/>
<dbReference type="SMR" id="Q98TF8"/>
<dbReference type="BioGRID" id="674987">
    <property type="interactions" value="1"/>
</dbReference>
<dbReference type="FunCoup" id="Q98TF8">
    <property type="interactions" value="2279"/>
</dbReference>
<dbReference type="STRING" id="9031.ENSGALP00000001013"/>
<dbReference type="PaxDb" id="9031-ENSGALP00000001013"/>
<dbReference type="GeneID" id="373937"/>
<dbReference type="KEGG" id="gga:373937"/>
<dbReference type="CTD" id="6146"/>
<dbReference type="VEuPathDB" id="HostDB:geneid_373937"/>
<dbReference type="eggNOG" id="KOG3434">
    <property type="taxonomic scope" value="Eukaryota"/>
</dbReference>
<dbReference type="InParanoid" id="Q98TF8"/>
<dbReference type="OrthoDB" id="10259820at2759"/>
<dbReference type="PhylomeDB" id="Q98TF8"/>
<dbReference type="Reactome" id="R-GGA-1799339">
    <property type="pathway name" value="SRP-dependent cotranslational protein targeting to membrane"/>
</dbReference>
<dbReference type="Reactome" id="R-GGA-72689">
    <property type="pathway name" value="Formation of a pool of free 40S subunits"/>
</dbReference>
<dbReference type="Reactome" id="R-GGA-72706">
    <property type="pathway name" value="GTP hydrolysis and joining of the 60S ribosomal subunit"/>
</dbReference>
<dbReference type="Reactome" id="R-GGA-975956">
    <property type="pathway name" value="Nonsense Mediated Decay (NMD) independent of the Exon Junction Complex (EJC)"/>
</dbReference>
<dbReference type="Reactome" id="R-GGA-975957">
    <property type="pathway name" value="Nonsense Mediated Decay (NMD) enhanced by the Exon Junction Complex (EJC)"/>
</dbReference>
<dbReference type="PRO" id="PR:Q98TF8"/>
<dbReference type="Proteomes" id="UP000000539">
    <property type="component" value="Chromosome 21"/>
</dbReference>
<dbReference type="Bgee" id="ENSGALG00000000719">
    <property type="expression patterns" value="Expressed in ovary and 13 other cell types or tissues"/>
</dbReference>
<dbReference type="GO" id="GO:0005737">
    <property type="term" value="C:cytoplasm"/>
    <property type="evidence" value="ECO:0007669"/>
    <property type="project" value="UniProtKB-SubCell"/>
</dbReference>
<dbReference type="GO" id="GO:1990904">
    <property type="term" value="C:ribonucleoprotein complex"/>
    <property type="evidence" value="ECO:0007669"/>
    <property type="project" value="UniProtKB-KW"/>
</dbReference>
<dbReference type="GO" id="GO:0005840">
    <property type="term" value="C:ribosome"/>
    <property type="evidence" value="ECO:0007669"/>
    <property type="project" value="UniProtKB-KW"/>
</dbReference>
<dbReference type="GO" id="GO:0003723">
    <property type="term" value="F:RNA binding"/>
    <property type="evidence" value="ECO:0000318"/>
    <property type="project" value="GO_Central"/>
</dbReference>
<dbReference type="GO" id="GO:0003735">
    <property type="term" value="F:structural constituent of ribosome"/>
    <property type="evidence" value="ECO:0000318"/>
    <property type="project" value="GO_Central"/>
</dbReference>
<dbReference type="GO" id="GO:0002181">
    <property type="term" value="P:cytoplasmic translation"/>
    <property type="evidence" value="ECO:0000318"/>
    <property type="project" value="GO_Central"/>
</dbReference>
<dbReference type="FunFam" id="3.30.1360.210:FF:000001">
    <property type="entry name" value="60S ribosomal protein L22 1"/>
    <property type="match status" value="1"/>
</dbReference>
<dbReference type="Gene3D" id="3.30.1360.210">
    <property type="match status" value="1"/>
</dbReference>
<dbReference type="InterPro" id="IPR002671">
    <property type="entry name" value="Ribosomal_eL22"/>
</dbReference>
<dbReference type="InterPro" id="IPR038526">
    <property type="entry name" value="Ribosomal_eL22_sf"/>
</dbReference>
<dbReference type="PANTHER" id="PTHR10064">
    <property type="entry name" value="60S RIBOSOMAL PROTEIN L22"/>
    <property type="match status" value="1"/>
</dbReference>
<dbReference type="PANTHER" id="PTHR10064:SF2">
    <property type="entry name" value="LARGE RIBOSOMAL SUBUNIT PROTEIN EL22"/>
    <property type="match status" value="1"/>
</dbReference>
<dbReference type="Pfam" id="PF01776">
    <property type="entry name" value="Ribosomal_L22e"/>
    <property type="match status" value="1"/>
</dbReference>
<feature type="chain" id="PRO_0000325942" description="Large ribosomal subunit protein eL22">
    <location>
        <begin position="1"/>
        <end position="128"/>
    </location>
</feature>
<organism>
    <name type="scientific">Gallus gallus</name>
    <name type="common">Chicken</name>
    <dbReference type="NCBI Taxonomy" id="9031"/>
    <lineage>
        <taxon>Eukaryota</taxon>
        <taxon>Metazoa</taxon>
        <taxon>Chordata</taxon>
        <taxon>Craniata</taxon>
        <taxon>Vertebrata</taxon>
        <taxon>Euteleostomi</taxon>
        <taxon>Archelosauria</taxon>
        <taxon>Archosauria</taxon>
        <taxon>Dinosauria</taxon>
        <taxon>Saurischia</taxon>
        <taxon>Theropoda</taxon>
        <taxon>Coelurosauria</taxon>
        <taxon>Aves</taxon>
        <taxon>Neognathae</taxon>
        <taxon>Galloanserae</taxon>
        <taxon>Galliformes</taxon>
        <taxon>Phasianidae</taxon>
        <taxon>Phasianinae</taxon>
        <taxon>Gallus</taxon>
    </lineage>
</organism>
<reference key="1">
    <citation type="journal article" date="2001" name="Genomics">
        <title>A complete map of the human ribosomal protein genes: assignment of 80 genes to the cytogenetic map and implications for human disorders.</title>
        <authorList>
            <person name="Uechi T."/>
            <person name="Tanaka T."/>
            <person name="Kenmochi N."/>
        </authorList>
    </citation>
    <scope>NUCLEOTIDE SEQUENCE [MRNA]</scope>
    <source>
        <tissue>Liver</tissue>
    </source>
</reference>
<comment type="function">
    <text evidence="1">Component of the large ribosomal subunit. The ribosome is a large ribonucleoprotein complex responsible for the synthesis of proteins in the cell.</text>
</comment>
<comment type="subunit">
    <text evidence="1">Component of the large ribosomal subunit.</text>
</comment>
<comment type="subcellular location">
    <subcellularLocation>
        <location evidence="1">Cytoplasm</location>
    </subcellularLocation>
</comment>
<comment type="similarity">
    <text evidence="2">Belongs to the eukaryotic ribosomal protein eL22 family.</text>
</comment>
<sequence>MAPVKKPAAKGGKKKKQVLKFTLDCTHPVEDGIMDAANFEQFLQERIKVNGKAGNLGGGVVTIERSKSKITVTSEVPFSKRYLKYLTKKYLKKNNLRDWLRVVANSKESYELRYFQINQDEEEEEEED</sequence>
<accession>Q98TF8</accession>
<gene>
    <name type="primary">RPL22</name>
</gene>
<keyword id="KW-0002">3D-structure</keyword>
<keyword id="KW-0963">Cytoplasm</keyword>
<keyword id="KW-1185">Reference proteome</keyword>
<keyword id="KW-0687">Ribonucleoprotein</keyword>
<keyword id="KW-0689">Ribosomal protein</keyword>
<proteinExistence type="evidence at protein level"/>